<name>TORL4_ARATH</name>
<organism>
    <name type="scientific">Arabidopsis thaliana</name>
    <name type="common">Mouse-ear cress</name>
    <dbReference type="NCBI Taxonomy" id="3702"/>
    <lineage>
        <taxon>Eukaryota</taxon>
        <taxon>Viridiplantae</taxon>
        <taxon>Streptophyta</taxon>
        <taxon>Embryophyta</taxon>
        <taxon>Tracheophyta</taxon>
        <taxon>Spermatophyta</taxon>
        <taxon>Magnoliopsida</taxon>
        <taxon>eudicotyledons</taxon>
        <taxon>Gunneridae</taxon>
        <taxon>Pentapetalae</taxon>
        <taxon>rosids</taxon>
        <taxon>malvids</taxon>
        <taxon>Brassicales</taxon>
        <taxon>Brassicaceae</taxon>
        <taxon>Camelineae</taxon>
        <taxon>Arabidopsis</taxon>
    </lineage>
</organism>
<gene>
    <name evidence="4" type="primary">TOR1L4</name>
    <name evidence="6" type="ordered locus">At1g27210</name>
    <name evidence="8" type="ORF">F17L21.1</name>
    <name evidence="7" type="ORF">T7N9.27</name>
</gene>
<comment type="sequence caution" evidence="5">
    <conflict type="erroneous gene model prediction">
        <sequence resource="EMBL-CDS" id="AAF79870"/>
    </conflict>
</comment>
<comment type="sequence caution" evidence="5">
    <conflict type="erroneous gene model prediction">
        <sequence resource="EMBL-CDS" id="AAF99750"/>
    </conflict>
</comment>
<proteinExistence type="evidence at transcript level"/>
<protein>
    <recommendedName>
        <fullName evidence="4">TORTIFOLIA1-like protein 4</fullName>
    </recommendedName>
</protein>
<feature type="chain" id="PRO_0000438407" description="TORTIFOLIA1-like protein 4">
    <location>
        <begin position="1"/>
        <end position="625"/>
    </location>
</feature>
<feature type="repeat" description="HEAT 1" evidence="2">
    <location>
        <begin position="69"/>
        <end position="106"/>
    </location>
</feature>
<feature type="repeat" description="HEAT 2" evidence="2">
    <location>
        <begin position="110"/>
        <end position="147"/>
    </location>
</feature>
<feature type="repeat" description="HEAT 3" evidence="2">
    <location>
        <begin position="149"/>
        <end position="186"/>
    </location>
</feature>
<feature type="repeat" description="HEAT 4" evidence="2">
    <location>
        <begin position="190"/>
        <end position="227"/>
    </location>
</feature>
<feature type="repeat" description="HEAT 5" evidence="2">
    <location>
        <begin position="230"/>
        <end position="268"/>
    </location>
</feature>
<feature type="region of interest" description="Disordered" evidence="3">
    <location>
        <begin position="1"/>
        <end position="34"/>
    </location>
</feature>
<feature type="region of interest" description="Disordered" evidence="3">
    <location>
        <begin position="391"/>
        <end position="466"/>
    </location>
</feature>
<feature type="region of interest" description="Disordered" evidence="3">
    <location>
        <begin position="582"/>
        <end position="625"/>
    </location>
</feature>
<feature type="compositionally biased region" description="Low complexity" evidence="3">
    <location>
        <begin position="12"/>
        <end position="29"/>
    </location>
</feature>
<feature type="compositionally biased region" description="Basic and acidic residues" evidence="3">
    <location>
        <begin position="404"/>
        <end position="413"/>
    </location>
</feature>
<feature type="compositionally biased region" description="Basic and acidic residues" evidence="3">
    <location>
        <begin position="420"/>
        <end position="434"/>
    </location>
</feature>
<feature type="compositionally biased region" description="Basic and acidic residues" evidence="3">
    <location>
        <begin position="455"/>
        <end position="466"/>
    </location>
</feature>
<feature type="compositionally biased region" description="Polar residues" evidence="3">
    <location>
        <begin position="612"/>
        <end position="625"/>
    </location>
</feature>
<feature type="modified residue" description="Phosphoserine" evidence="1">
    <location>
        <position position="475"/>
    </location>
</feature>
<keyword id="KW-0597">Phosphoprotein</keyword>
<keyword id="KW-1185">Reference proteome</keyword>
<keyword id="KW-0677">Repeat</keyword>
<accession>Q93ZH1</accession>
<accession>Q9FZL2</accession>
<accession>Q9LFX1</accession>
<sequence>MSVHGRFPASPPISLSPSSSSTSPSSQSPSTPPDLKQRVIACLNKLADRDTLALASAELDSIARNLTHDSFSPFLNCIHNTDSSVKSPVRKQCVALLSVLSRYHGDSLTPHLAKMVSTVIRRLRDPDSSVRSACAVATADMSAHVTRQPFASVAKPLIETLIQEGDSNLQIGAALCLAASVDAATDPESEQLRKSLPKIGKLLKSDGFKAKAALLSAVGSIITAGGAGTKPVLDWLVPVLIEFLSSEDWAARKSAAEALGKVATAEDLASQYKKTCTTALESRRFDKVKSVRETMNRALNLWKEVSTDDEASLSPSRSSTDDGNIGCFSSVTRSSTIDVGLKSARPKKVTPIMKRSPSLPVNRSYAATRQKENLPKRNQGNMTMLVEEASSVDNKGPHFTPVKKSSEETEEKANSGGPDIIKHTISEKSREDSKVSSFGGLRSGSRVAPCSDDGDSVKNCKDDVEESKKDSEELSLIREQLALIENQQSSLLDLLQKFMGTSQSGIQSLESRVSGLEMALDEISCDLAVSNGRVPRNSSGCAGDSCSKLPGTEFLSPKFWRKTEERPRNRNTANEMAAYDQGMRESTDTNNGQRGGSVFQKRSRRDQFQDCMHTTLQKPTTRLST</sequence>
<reference key="1">
    <citation type="journal article" date="2000" name="Nature">
        <title>Sequence and analysis of chromosome 1 of the plant Arabidopsis thaliana.</title>
        <authorList>
            <person name="Theologis A."/>
            <person name="Ecker J.R."/>
            <person name="Palm C.J."/>
            <person name="Federspiel N.A."/>
            <person name="Kaul S."/>
            <person name="White O."/>
            <person name="Alonso J."/>
            <person name="Altafi H."/>
            <person name="Araujo R."/>
            <person name="Bowman C.L."/>
            <person name="Brooks S.Y."/>
            <person name="Buehler E."/>
            <person name="Chan A."/>
            <person name="Chao Q."/>
            <person name="Chen H."/>
            <person name="Cheuk R.F."/>
            <person name="Chin C.W."/>
            <person name="Chung M.K."/>
            <person name="Conn L."/>
            <person name="Conway A.B."/>
            <person name="Conway A.R."/>
            <person name="Creasy T.H."/>
            <person name="Dewar K."/>
            <person name="Dunn P."/>
            <person name="Etgu P."/>
            <person name="Feldblyum T.V."/>
            <person name="Feng J.-D."/>
            <person name="Fong B."/>
            <person name="Fujii C.Y."/>
            <person name="Gill J.E."/>
            <person name="Goldsmith A.D."/>
            <person name="Haas B."/>
            <person name="Hansen N.F."/>
            <person name="Hughes B."/>
            <person name="Huizar L."/>
            <person name="Hunter J.L."/>
            <person name="Jenkins J."/>
            <person name="Johnson-Hopson C."/>
            <person name="Khan S."/>
            <person name="Khaykin E."/>
            <person name="Kim C.J."/>
            <person name="Koo H.L."/>
            <person name="Kremenetskaia I."/>
            <person name="Kurtz D.B."/>
            <person name="Kwan A."/>
            <person name="Lam B."/>
            <person name="Langin-Hooper S."/>
            <person name="Lee A."/>
            <person name="Lee J.M."/>
            <person name="Lenz C.A."/>
            <person name="Li J.H."/>
            <person name="Li Y.-P."/>
            <person name="Lin X."/>
            <person name="Liu S.X."/>
            <person name="Liu Z.A."/>
            <person name="Luros J.S."/>
            <person name="Maiti R."/>
            <person name="Marziali A."/>
            <person name="Militscher J."/>
            <person name="Miranda M."/>
            <person name="Nguyen M."/>
            <person name="Nierman W.C."/>
            <person name="Osborne B.I."/>
            <person name="Pai G."/>
            <person name="Peterson J."/>
            <person name="Pham P.K."/>
            <person name="Rizzo M."/>
            <person name="Rooney T."/>
            <person name="Rowley D."/>
            <person name="Sakano H."/>
            <person name="Salzberg S.L."/>
            <person name="Schwartz J.R."/>
            <person name="Shinn P."/>
            <person name="Southwick A.M."/>
            <person name="Sun H."/>
            <person name="Tallon L.J."/>
            <person name="Tambunga G."/>
            <person name="Toriumi M.J."/>
            <person name="Town C.D."/>
            <person name="Utterback T."/>
            <person name="Van Aken S."/>
            <person name="Vaysberg M."/>
            <person name="Vysotskaia V.S."/>
            <person name="Walker M."/>
            <person name="Wu D."/>
            <person name="Yu G."/>
            <person name="Fraser C.M."/>
            <person name="Venter J.C."/>
            <person name="Davis R.W."/>
        </authorList>
    </citation>
    <scope>NUCLEOTIDE SEQUENCE [LARGE SCALE GENOMIC DNA]</scope>
    <source>
        <strain>cv. Columbia</strain>
    </source>
</reference>
<reference key="2">
    <citation type="journal article" date="2017" name="Plant J.">
        <title>Araport11: a complete reannotation of the Arabidopsis thaliana reference genome.</title>
        <authorList>
            <person name="Cheng C.Y."/>
            <person name="Krishnakumar V."/>
            <person name="Chan A.P."/>
            <person name="Thibaud-Nissen F."/>
            <person name="Schobel S."/>
            <person name="Town C.D."/>
        </authorList>
    </citation>
    <scope>GENOME REANNOTATION</scope>
    <source>
        <strain>cv. Columbia</strain>
    </source>
</reference>
<reference key="3">
    <citation type="journal article" date="2003" name="Science">
        <title>Empirical analysis of transcriptional activity in the Arabidopsis genome.</title>
        <authorList>
            <person name="Yamada K."/>
            <person name="Lim J."/>
            <person name="Dale J.M."/>
            <person name="Chen H."/>
            <person name="Shinn P."/>
            <person name="Palm C.J."/>
            <person name="Southwick A.M."/>
            <person name="Wu H.C."/>
            <person name="Kim C.J."/>
            <person name="Nguyen M."/>
            <person name="Pham P.K."/>
            <person name="Cheuk R.F."/>
            <person name="Karlin-Newmann G."/>
            <person name="Liu S.X."/>
            <person name="Lam B."/>
            <person name="Sakano H."/>
            <person name="Wu T."/>
            <person name="Yu G."/>
            <person name="Miranda M."/>
            <person name="Quach H.L."/>
            <person name="Tripp M."/>
            <person name="Chang C.H."/>
            <person name="Lee J.M."/>
            <person name="Toriumi M.J."/>
            <person name="Chan M.M."/>
            <person name="Tang C.C."/>
            <person name="Onodera C.S."/>
            <person name="Deng J.M."/>
            <person name="Akiyama K."/>
            <person name="Ansari Y."/>
            <person name="Arakawa T."/>
            <person name="Banh J."/>
            <person name="Banno F."/>
            <person name="Bowser L."/>
            <person name="Brooks S.Y."/>
            <person name="Carninci P."/>
            <person name="Chao Q."/>
            <person name="Choy N."/>
            <person name="Enju A."/>
            <person name="Goldsmith A.D."/>
            <person name="Gurjal M."/>
            <person name="Hansen N.F."/>
            <person name="Hayashizaki Y."/>
            <person name="Johnson-Hopson C."/>
            <person name="Hsuan V.W."/>
            <person name="Iida K."/>
            <person name="Karnes M."/>
            <person name="Khan S."/>
            <person name="Koesema E."/>
            <person name="Ishida J."/>
            <person name="Jiang P.X."/>
            <person name="Jones T."/>
            <person name="Kawai J."/>
            <person name="Kamiya A."/>
            <person name="Meyers C."/>
            <person name="Nakajima M."/>
            <person name="Narusaka M."/>
            <person name="Seki M."/>
            <person name="Sakurai T."/>
            <person name="Satou M."/>
            <person name="Tamse R."/>
            <person name="Vaysberg M."/>
            <person name="Wallender E.K."/>
            <person name="Wong C."/>
            <person name="Yamamura Y."/>
            <person name="Yuan S."/>
            <person name="Shinozaki K."/>
            <person name="Davis R.W."/>
            <person name="Theologis A."/>
            <person name="Ecker J.R."/>
        </authorList>
    </citation>
    <scope>NUCLEOTIDE SEQUENCE [LARGE SCALE MRNA]</scope>
    <source>
        <strain>cv. Columbia</strain>
    </source>
</reference>
<reference key="4">
    <citation type="journal article" date="2004" name="Curr. Biol.">
        <title>Helical growth of the Arabidopsis mutant tortifolia1 reveals a plant-specific microtubule-associated protein.</title>
        <authorList>
            <person name="Buschmann H."/>
            <person name="Fabri C.O."/>
            <person name="Hauptmann M."/>
            <person name="Hutzler P."/>
            <person name="Laux T."/>
            <person name="Lloyd C.W."/>
            <person name="Schaeffner A.R."/>
        </authorList>
    </citation>
    <scope>GENE FAMILY</scope>
</reference>
<reference key="5">
    <citation type="journal article" date="2004" name="Plant Physiol.">
        <title>Plant-specific microtubule-associated protein SPIRAL2 is required for anisotropic growth in Arabidopsis.</title>
        <authorList>
            <person name="Shoji T."/>
            <person name="Narita N.N."/>
            <person name="Hayashi K."/>
            <person name="Asada J."/>
            <person name="Hamada T."/>
            <person name="Sonobe S."/>
            <person name="Nakajima K."/>
            <person name="Hashimoto T."/>
        </authorList>
    </citation>
    <scope>GENE FAMILY</scope>
</reference>
<dbReference type="EMBL" id="AC000348">
    <property type="protein sequence ID" value="AAF79870.1"/>
    <property type="status" value="ALT_SEQ"/>
    <property type="molecule type" value="Genomic_DNA"/>
</dbReference>
<dbReference type="EMBL" id="AC004557">
    <property type="protein sequence ID" value="AAF99750.1"/>
    <property type="status" value="ALT_SEQ"/>
    <property type="molecule type" value="Genomic_DNA"/>
</dbReference>
<dbReference type="EMBL" id="CP002684">
    <property type="protein sequence ID" value="AEE30794.1"/>
    <property type="molecule type" value="Genomic_DNA"/>
</dbReference>
<dbReference type="EMBL" id="AY057540">
    <property type="protein sequence ID" value="AAL09780.1"/>
    <property type="molecule type" value="mRNA"/>
</dbReference>
<dbReference type="EMBL" id="AY140087">
    <property type="protein sequence ID" value="AAM98228.1"/>
    <property type="molecule type" value="mRNA"/>
</dbReference>
<dbReference type="EMBL" id="BT008391">
    <property type="protein sequence ID" value="AAP37750.1"/>
    <property type="molecule type" value="mRNA"/>
</dbReference>
<dbReference type="RefSeq" id="NP_564273.1">
    <property type="nucleotide sequence ID" value="NM_102483.3"/>
</dbReference>
<dbReference type="SMR" id="Q93ZH1"/>
<dbReference type="FunCoup" id="Q93ZH1">
    <property type="interactions" value="134"/>
</dbReference>
<dbReference type="IntAct" id="Q93ZH1">
    <property type="interactions" value="1"/>
</dbReference>
<dbReference type="STRING" id="3702.Q93ZH1"/>
<dbReference type="iPTMnet" id="Q93ZH1"/>
<dbReference type="PaxDb" id="3702-AT1G27210.1"/>
<dbReference type="ProteomicsDB" id="228294"/>
<dbReference type="EnsemblPlants" id="AT1G27210.1">
    <property type="protein sequence ID" value="AT1G27210.1"/>
    <property type="gene ID" value="AT1G27210"/>
</dbReference>
<dbReference type="GeneID" id="839610"/>
<dbReference type="Gramene" id="AT1G27210.1">
    <property type="protein sequence ID" value="AT1G27210.1"/>
    <property type="gene ID" value="AT1G27210"/>
</dbReference>
<dbReference type="KEGG" id="ath:AT1G27210"/>
<dbReference type="Araport" id="AT1G27210"/>
<dbReference type="TAIR" id="AT1G27210"/>
<dbReference type="eggNOG" id="ENOG502QQTY">
    <property type="taxonomic scope" value="Eukaryota"/>
</dbReference>
<dbReference type="HOGENOM" id="CLU_025475_0_0_1"/>
<dbReference type="InParanoid" id="Q93ZH1"/>
<dbReference type="OMA" id="PFLNCIH"/>
<dbReference type="PhylomeDB" id="Q93ZH1"/>
<dbReference type="PRO" id="PR:Q93ZH1"/>
<dbReference type="Proteomes" id="UP000006548">
    <property type="component" value="Chromosome 1"/>
</dbReference>
<dbReference type="ExpressionAtlas" id="Q93ZH1">
    <property type="expression patterns" value="baseline and differential"/>
</dbReference>
<dbReference type="GO" id="GO:0005874">
    <property type="term" value="C:microtubule"/>
    <property type="evidence" value="ECO:0007669"/>
    <property type="project" value="InterPro"/>
</dbReference>
<dbReference type="GO" id="GO:0008017">
    <property type="term" value="F:microtubule binding"/>
    <property type="evidence" value="ECO:0007669"/>
    <property type="project" value="InterPro"/>
</dbReference>
<dbReference type="FunFam" id="1.25.10.10:FF:000464">
    <property type="entry name" value="TORTIFOLIA1-like protein 3 isoform A"/>
    <property type="match status" value="1"/>
</dbReference>
<dbReference type="Gene3D" id="1.25.10.10">
    <property type="entry name" value="Leucine-rich Repeat Variant"/>
    <property type="match status" value="1"/>
</dbReference>
<dbReference type="InterPro" id="IPR011989">
    <property type="entry name" value="ARM-like"/>
</dbReference>
<dbReference type="InterPro" id="IPR016024">
    <property type="entry name" value="ARM-type_fold"/>
</dbReference>
<dbReference type="InterPro" id="IPR021133">
    <property type="entry name" value="HEAT_type_2"/>
</dbReference>
<dbReference type="InterPro" id="IPR033337">
    <property type="entry name" value="TORTIFOLIA1/SINE1-2"/>
</dbReference>
<dbReference type="PANTHER" id="PTHR31355">
    <property type="entry name" value="MICROTUBULE-ASSOCIATED PROTEIN TORTIFOLIA1"/>
    <property type="match status" value="1"/>
</dbReference>
<dbReference type="PANTHER" id="PTHR31355:SF32">
    <property type="entry name" value="TORTIFOLIA1-LIKE PROTEIN 4"/>
    <property type="match status" value="1"/>
</dbReference>
<dbReference type="Pfam" id="PF24714">
    <property type="entry name" value="TOR1L1_N"/>
    <property type="match status" value="1"/>
</dbReference>
<dbReference type="SUPFAM" id="SSF48371">
    <property type="entry name" value="ARM repeat"/>
    <property type="match status" value="1"/>
</dbReference>
<dbReference type="PROSITE" id="PS50077">
    <property type="entry name" value="HEAT_REPEAT"/>
    <property type="match status" value="1"/>
</dbReference>
<evidence type="ECO:0000250" key="1">
    <source>
        <dbReference type="UniProtKB" id="Q9XIE4"/>
    </source>
</evidence>
<evidence type="ECO:0000255" key="2"/>
<evidence type="ECO:0000256" key="3">
    <source>
        <dbReference type="SAM" id="MobiDB-lite"/>
    </source>
</evidence>
<evidence type="ECO:0000303" key="4">
    <source>
    </source>
</evidence>
<evidence type="ECO:0000305" key="5"/>
<evidence type="ECO:0000312" key="6">
    <source>
        <dbReference type="Araport" id="AT1G27210"/>
    </source>
</evidence>
<evidence type="ECO:0000312" key="7">
    <source>
        <dbReference type="EMBL" id="AAF79870.1"/>
    </source>
</evidence>
<evidence type="ECO:0000312" key="8">
    <source>
        <dbReference type="EMBL" id="AAF99750.1"/>
    </source>
</evidence>